<name>RSBW_LISMH</name>
<protein>
    <recommendedName>
        <fullName evidence="1">Serine-protein kinase RsbW</fullName>
        <ecNumber evidence="1">2.7.11.1</ecNumber>
    </recommendedName>
    <alternativeName>
        <fullName evidence="1">Anti-sigma-B factor</fullName>
    </alternativeName>
    <alternativeName>
        <fullName evidence="1">Sigma-B negative effector RsbW</fullName>
    </alternativeName>
</protein>
<dbReference type="EC" id="2.7.11.1" evidence="1"/>
<dbReference type="EMBL" id="CP001175">
    <property type="protein sequence ID" value="ACK40073.1"/>
    <property type="molecule type" value="Genomic_DNA"/>
</dbReference>
<dbReference type="RefSeq" id="WP_003724820.1">
    <property type="nucleotide sequence ID" value="NC_011660.1"/>
</dbReference>
<dbReference type="SMR" id="B8DG65"/>
<dbReference type="KEGG" id="lmh:LMHCC_1732"/>
<dbReference type="HOGENOM" id="CLU_090336_11_1_9"/>
<dbReference type="GO" id="GO:0005524">
    <property type="term" value="F:ATP binding"/>
    <property type="evidence" value="ECO:0007669"/>
    <property type="project" value="UniProtKB-KW"/>
</dbReference>
<dbReference type="GO" id="GO:0106310">
    <property type="term" value="F:protein serine kinase activity"/>
    <property type="evidence" value="ECO:0007669"/>
    <property type="project" value="RHEA"/>
</dbReference>
<dbReference type="GO" id="GO:0004674">
    <property type="term" value="F:protein serine/threonine kinase activity"/>
    <property type="evidence" value="ECO:0007669"/>
    <property type="project" value="UniProtKB-KW"/>
</dbReference>
<dbReference type="GO" id="GO:0016989">
    <property type="term" value="F:sigma factor antagonist activity"/>
    <property type="evidence" value="ECO:0007669"/>
    <property type="project" value="InterPro"/>
</dbReference>
<dbReference type="CDD" id="cd16936">
    <property type="entry name" value="HATPase_RsbW-like"/>
    <property type="match status" value="1"/>
</dbReference>
<dbReference type="FunFam" id="3.30.565.10:FF:000026">
    <property type="entry name" value="Serine-protein kinase RsbW"/>
    <property type="match status" value="1"/>
</dbReference>
<dbReference type="Gene3D" id="3.30.565.10">
    <property type="entry name" value="Histidine kinase-like ATPase, C-terminal domain"/>
    <property type="match status" value="1"/>
</dbReference>
<dbReference type="HAMAP" id="MF_00638">
    <property type="entry name" value="Anti_sigma_B"/>
    <property type="match status" value="1"/>
</dbReference>
<dbReference type="InterPro" id="IPR050267">
    <property type="entry name" value="Anti-sigma-factor_SerPK"/>
</dbReference>
<dbReference type="InterPro" id="IPR036890">
    <property type="entry name" value="HATPase_C_sf"/>
</dbReference>
<dbReference type="InterPro" id="IPR010193">
    <property type="entry name" value="RsbW"/>
</dbReference>
<dbReference type="NCBIfam" id="NF003144">
    <property type="entry name" value="PRK04069.1"/>
    <property type="match status" value="1"/>
</dbReference>
<dbReference type="NCBIfam" id="TIGR01924">
    <property type="entry name" value="rsbW_low_gc"/>
    <property type="match status" value="1"/>
</dbReference>
<dbReference type="PANTHER" id="PTHR35526">
    <property type="entry name" value="ANTI-SIGMA-F FACTOR RSBW-RELATED"/>
    <property type="match status" value="1"/>
</dbReference>
<dbReference type="PANTHER" id="PTHR35526:SF9">
    <property type="entry name" value="SERINE-PROTEIN KINASE RSBW"/>
    <property type="match status" value="1"/>
</dbReference>
<dbReference type="Pfam" id="PF13581">
    <property type="entry name" value="HATPase_c_2"/>
    <property type="match status" value="1"/>
</dbReference>
<dbReference type="SUPFAM" id="SSF55874">
    <property type="entry name" value="ATPase domain of HSP90 chaperone/DNA topoisomerase II/histidine kinase"/>
    <property type="match status" value="1"/>
</dbReference>
<feature type="chain" id="PRO_1000147388" description="Serine-protein kinase RsbW">
    <location>
        <begin position="1"/>
        <end position="157"/>
    </location>
</feature>
<gene>
    <name evidence="1" type="primary">rsbW</name>
    <name type="ordered locus">LMHCC_1732</name>
</gene>
<accession>B8DG65</accession>
<comment type="function">
    <text evidence="1">Negative regulator of sigma-B activity. Phosphorylates and inactivates its specific antagonist protein, RsbV. Upon phosphorylation of RsbV, RsbW is released and binds to sigma-B, thereby blocking its ability to form an RNA polymerase holoenzyme (E-sigma-B).</text>
</comment>
<comment type="catalytic activity">
    <reaction evidence="1">
        <text>L-seryl-[protein] + ATP = O-phospho-L-seryl-[protein] + ADP + H(+)</text>
        <dbReference type="Rhea" id="RHEA:17989"/>
        <dbReference type="Rhea" id="RHEA-COMP:9863"/>
        <dbReference type="Rhea" id="RHEA-COMP:11604"/>
        <dbReference type="ChEBI" id="CHEBI:15378"/>
        <dbReference type="ChEBI" id="CHEBI:29999"/>
        <dbReference type="ChEBI" id="CHEBI:30616"/>
        <dbReference type="ChEBI" id="CHEBI:83421"/>
        <dbReference type="ChEBI" id="CHEBI:456216"/>
        <dbReference type="EC" id="2.7.11.1"/>
    </reaction>
</comment>
<comment type="catalytic activity">
    <reaction evidence="1">
        <text>L-threonyl-[protein] + ATP = O-phospho-L-threonyl-[protein] + ADP + H(+)</text>
        <dbReference type="Rhea" id="RHEA:46608"/>
        <dbReference type="Rhea" id="RHEA-COMP:11060"/>
        <dbReference type="Rhea" id="RHEA-COMP:11605"/>
        <dbReference type="ChEBI" id="CHEBI:15378"/>
        <dbReference type="ChEBI" id="CHEBI:30013"/>
        <dbReference type="ChEBI" id="CHEBI:30616"/>
        <dbReference type="ChEBI" id="CHEBI:61977"/>
        <dbReference type="ChEBI" id="CHEBI:456216"/>
        <dbReference type="EC" id="2.7.11.1"/>
    </reaction>
</comment>
<comment type="similarity">
    <text evidence="1">Belongs to the anti-sigma-factor family.</text>
</comment>
<organism>
    <name type="scientific">Listeria monocytogenes serotype 4a (strain HCC23)</name>
    <dbReference type="NCBI Taxonomy" id="552536"/>
    <lineage>
        <taxon>Bacteria</taxon>
        <taxon>Bacillati</taxon>
        <taxon>Bacillota</taxon>
        <taxon>Bacilli</taxon>
        <taxon>Bacillales</taxon>
        <taxon>Listeriaceae</taxon>
        <taxon>Listeria</taxon>
    </lineage>
</organism>
<sequence length="157" mass="17498">MATMHDKITLQLPAKPEYVSLGRLSLSGIASRAGFSYEAIEDLKIAVSEAITNSVKHAFKGEDDGEITVEYLIYEDKLEVRVSDNGTSFDLETRKQEIGPYEVGEDAEMMRIGGLGLFLIETLMDDVKLYYDEGVSVVMTKYINEKQVEENAKSIST</sequence>
<keyword id="KW-0067">ATP-binding</keyword>
<keyword id="KW-0418">Kinase</keyword>
<keyword id="KW-0547">Nucleotide-binding</keyword>
<keyword id="KW-0723">Serine/threonine-protein kinase</keyword>
<keyword id="KW-0808">Transferase</keyword>
<reference key="1">
    <citation type="journal article" date="2011" name="J. Bacteriol.">
        <title>Genome sequence of lineage III Listeria monocytogenes strain HCC23.</title>
        <authorList>
            <person name="Steele C.L."/>
            <person name="Donaldson J.R."/>
            <person name="Paul D."/>
            <person name="Banes M.M."/>
            <person name="Arick T."/>
            <person name="Bridges S.M."/>
            <person name="Lawrence M.L."/>
        </authorList>
    </citation>
    <scope>NUCLEOTIDE SEQUENCE [LARGE SCALE GENOMIC DNA]</scope>
    <source>
        <strain>HCC23</strain>
    </source>
</reference>
<proteinExistence type="inferred from homology"/>
<evidence type="ECO:0000255" key="1">
    <source>
        <dbReference type="HAMAP-Rule" id="MF_00638"/>
    </source>
</evidence>